<feature type="chain" id="PRO_1000092463" description="Elongation factor 4">
    <location>
        <begin position="1"/>
        <end position="601"/>
    </location>
</feature>
<feature type="domain" description="tr-type G">
    <location>
        <begin position="7"/>
        <end position="189"/>
    </location>
</feature>
<feature type="binding site" evidence="1">
    <location>
        <begin position="19"/>
        <end position="24"/>
    </location>
    <ligand>
        <name>GTP</name>
        <dbReference type="ChEBI" id="CHEBI:37565"/>
    </ligand>
</feature>
<feature type="binding site" evidence="1">
    <location>
        <begin position="136"/>
        <end position="139"/>
    </location>
    <ligand>
        <name>GTP</name>
        <dbReference type="ChEBI" id="CHEBI:37565"/>
    </ligand>
</feature>
<keyword id="KW-0997">Cell inner membrane</keyword>
<keyword id="KW-1003">Cell membrane</keyword>
<keyword id="KW-0342">GTP-binding</keyword>
<keyword id="KW-0378">Hydrolase</keyword>
<keyword id="KW-0472">Membrane</keyword>
<keyword id="KW-0547">Nucleotide-binding</keyword>
<keyword id="KW-0648">Protein biosynthesis</keyword>
<reference key="1">
    <citation type="journal article" date="2008" name="J. Biotechnol.">
        <title>The genome of Xanthomonas campestris pv. campestris B100 and its use for the reconstruction of metabolic pathways involved in xanthan biosynthesis.</title>
        <authorList>
            <person name="Vorhoelter F.-J."/>
            <person name="Schneiker S."/>
            <person name="Goesmann A."/>
            <person name="Krause L."/>
            <person name="Bekel T."/>
            <person name="Kaiser O."/>
            <person name="Linke B."/>
            <person name="Patschkowski T."/>
            <person name="Rueckert C."/>
            <person name="Schmid J."/>
            <person name="Sidhu V.K."/>
            <person name="Sieber V."/>
            <person name="Tauch A."/>
            <person name="Watt S.A."/>
            <person name="Weisshaar B."/>
            <person name="Becker A."/>
            <person name="Niehaus K."/>
            <person name="Puehler A."/>
        </authorList>
    </citation>
    <scope>NUCLEOTIDE SEQUENCE [LARGE SCALE GENOMIC DNA]</scope>
    <source>
        <strain>B100</strain>
    </source>
</reference>
<sequence>MSSDSMRNIRNFSIIAHVDHGKSTLADRIIQLCGGLQAREMEAQVLDSNPIERERGITIKAQSVSLPYTAKDGQTYFLNFIDTPGHVDFSYEVSRSLAACEGALLVVDAAQGVEAQSVANCYTAVEQGLEVVPVLNKIDLPTADIERAKAEIEAVIGIDAEDAVAVSAKTGLNIDLVLEAIVHRIPPPKPRDTDKLQALIIDSWFDNYLGVVSLVRVMQGEIKPGSKIQVMSTGRTHLVDKVGVFTPKRKELVALGAGEVGWINASIKDVHGAPVGDTLTLAADPAPHALPGFQEMQPRVFAGLFPVDAEDYPDLREALDKLRLNDAALRFEPESSEAMGFGFRCGFLGMLHMEIVQERLEREYNLNLISTAPTVVYEVLKTDGTIIPMDNPSKLPPLNHVEEIREPIIRANILTPPDYVGNIITLCEEKRGSQIGINYLGSQVQISYELPMAEVVLDFFDKLKSVSRGYASLDYHFLRFDAGPFVRVDTLINGDKVDALSIIVHRSYADRRGRELCEKMKELIPRQMFDVAIQAAVGSQIISRSTVKAMRKNVLAKCYGGDVSRKKKLLEKQKEGKKRMKQVGRVEIPQEAFLAVLQMDK</sequence>
<comment type="function">
    <text evidence="1">Required for accurate and efficient protein synthesis under certain stress conditions. May act as a fidelity factor of the translation reaction, by catalyzing a one-codon backward translocation of tRNAs on improperly translocated ribosomes. Back-translocation proceeds from a post-translocation (POST) complex to a pre-translocation (PRE) complex, thus giving elongation factor G a second chance to translocate the tRNAs correctly. Binds to ribosomes in a GTP-dependent manner.</text>
</comment>
<comment type="catalytic activity">
    <reaction evidence="1">
        <text>GTP + H2O = GDP + phosphate + H(+)</text>
        <dbReference type="Rhea" id="RHEA:19669"/>
        <dbReference type="ChEBI" id="CHEBI:15377"/>
        <dbReference type="ChEBI" id="CHEBI:15378"/>
        <dbReference type="ChEBI" id="CHEBI:37565"/>
        <dbReference type="ChEBI" id="CHEBI:43474"/>
        <dbReference type="ChEBI" id="CHEBI:58189"/>
        <dbReference type="EC" id="3.6.5.n1"/>
    </reaction>
</comment>
<comment type="subcellular location">
    <subcellularLocation>
        <location evidence="1">Cell inner membrane</location>
        <topology evidence="1">Peripheral membrane protein</topology>
        <orientation evidence="1">Cytoplasmic side</orientation>
    </subcellularLocation>
</comment>
<comment type="similarity">
    <text evidence="1">Belongs to the TRAFAC class translation factor GTPase superfamily. Classic translation factor GTPase family. LepA subfamily.</text>
</comment>
<accession>B0RX30</accession>
<name>LEPA_XANCB</name>
<dbReference type="EC" id="3.6.5.n1" evidence="1"/>
<dbReference type="EMBL" id="AM920689">
    <property type="protein sequence ID" value="CAP52396.1"/>
    <property type="molecule type" value="Genomic_DNA"/>
</dbReference>
<dbReference type="SMR" id="B0RX30"/>
<dbReference type="KEGG" id="xca:xcc-b100_3033"/>
<dbReference type="HOGENOM" id="CLU_009995_3_3_6"/>
<dbReference type="Proteomes" id="UP000001188">
    <property type="component" value="Chromosome"/>
</dbReference>
<dbReference type="GO" id="GO:0005886">
    <property type="term" value="C:plasma membrane"/>
    <property type="evidence" value="ECO:0007669"/>
    <property type="project" value="UniProtKB-SubCell"/>
</dbReference>
<dbReference type="GO" id="GO:0005525">
    <property type="term" value="F:GTP binding"/>
    <property type="evidence" value="ECO:0007669"/>
    <property type="project" value="UniProtKB-UniRule"/>
</dbReference>
<dbReference type="GO" id="GO:0003924">
    <property type="term" value="F:GTPase activity"/>
    <property type="evidence" value="ECO:0007669"/>
    <property type="project" value="UniProtKB-UniRule"/>
</dbReference>
<dbReference type="GO" id="GO:0097216">
    <property type="term" value="F:guanosine tetraphosphate binding"/>
    <property type="evidence" value="ECO:0007669"/>
    <property type="project" value="UniProtKB-ARBA"/>
</dbReference>
<dbReference type="GO" id="GO:0043022">
    <property type="term" value="F:ribosome binding"/>
    <property type="evidence" value="ECO:0007669"/>
    <property type="project" value="UniProtKB-UniRule"/>
</dbReference>
<dbReference type="GO" id="GO:0003746">
    <property type="term" value="F:translation elongation factor activity"/>
    <property type="evidence" value="ECO:0007669"/>
    <property type="project" value="UniProtKB-UniRule"/>
</dbReference>
<dbReference type="GO" id="GO:0045727">
    <property type="term" value="P:positive regulation of translation"/>
    <property type="evidence" value="ECO:0007669"/>
    <property type="project" value="UniProtKB-UniRule"/>
</dbReference>
<dbReference type="CDD" id="cd03699">
    <property type="entry name" value="EF4_II"/>
    <property type="match status" value="1"/>
</dbReference>
<dbReference type="CDD" id="cd16260">
    <property type="entry name" value="EF4_III"/>
    <property type="match status" value="1"/>
</dbReference>
<dbReference type="CDD" id="cd01890">
    <property type="entry name" value="LepA"/>
    <property type="match status" value="1"/>
</dbReference>
<dbReference type="CDD" id="cd03709">
    <property type="entry name" value="lepA_C"/>
    <property type="match status" value="1"/>
</dbReference>
<dbReference type="FunFam" id="3.40.50.300:FF:000078">
    <property type="entry name" value="Elongation factor 4"/>
    <property type="match status" value="1"/>
</dbReference>
<dbReference type="FunFam" id="2.40.30.10:FF:000015">
    <property type="entry name" value="Translation factor GUF1, mitochondrial"/>
    <property type="match status" value="1"/>
</dbReference>
<dbReference type="FunFam" id="3.30.70.240:FF:000007">
    <property type="entry name" value="Translation factor GUF1, mitochondrial"/>
    <property type="match status" value="1"/>
</dbReference>
<dbReference type="FunFam" id="3.30.70.2570:FF:000001">
    <property type="entry name" value="Translation factor GUF1, mitochondrial"/>
    <property type="match status" value="1"/>
</dbReference>
<dbReference type="FunFam" id="3.30.70.870:FF:000004">
    <property type="entry name" value="Translation factor GUF1, mitochondrial"/>
    <property type="match status" value="1"/>
</dbReference>
<dbReference type="Gene3D" id="3.30.70.240">
    <property type="match status" value="1"/>
</dbReference>
<dbReference type="Gene3D" id="3.30.70.2570">
    <property type="entry name" value="Elongation factor 4, C-terminal domain"/>
    <property type="match status" value="1"/>
</dbReference>
<dbReference type="Gene3D" id="3.30.70.870">
    <property type="entry name" value="Elongation Factor G (Translational Gtpase), domain 3"/>
    <property type="match status" value="1"/>
</dbReference>
<dbReference type="Gene3D" id="3.40.50.300">
    <property type="entry name" value="P-loop containing nucleotide triphosphate hydrolases"/>
    <property type="match status" value="1"/>
</dbReference>
<dbReference type="Gene3D" id="2.40.30.10">
    <property type="entry name" value="Translation factors"/>
    <property type="match status" value="1"/>
</dbReference>
<dbReference type="HAMAP" id="MF_00071">
    <property type="entry name" value="LepA"/>
    <property type="match status" value="1"/>
</dbReference>
<dbReference type="InterPro" id="IPR006297">
    <property type="entry name" value="EF-4"/>
</dbReference>
<dbReference type="InterPro" id="IPR035647">
    <property type="entry name" value="EFG_III/V"/>
</dbReference>
<dbReference type="InterPro" id="IPR000640">
    <property type="entry name" value="EFG_V-like"/>
</dbReference>
<dbReference type="InterPro" id="IPR004161">
    <property type="entry name" value="EFTu-like_2"/>
</dbReference>
<dbReference type="InterPro" id="IPR031157">
    <property type="entry name" value="G_TR_CS"/>
</dbReference>
<dbReference type="InterPro" id="IPR038363">
    <property type="entry name" value="LepA_C_sf"/>
</dbReference>
<dbReference type="InterPro" id="IPR013842">
    <property type="entry name" value="LepA_CTD"/>
</dbReference>
<dbReference type="InterPro" id="IPR035654">
    <property type="entry name" value="LepA_IV"/>
</dbReference>
<dbReference type="InterPro" id="IPR027417">
    <property type="entry name" value="P-loop_NTPase"/>
</dbReference>
<dbReference type="InterPro" id="IPR005225">
    <property type="entry name" value="Small_GTP-bd"/>
</dbReference>
<dbReference type="InterPro" id="IPR000795">
    <property type="entry name" value="T_Tr_GTP-bd_dom"/>
</dbReference>
<dbReference type="NCBIfam" id="TIGR01393">
    <property type="entry name" value="lepA"/>
    <property type="match status" value="1"/>
</dbReference>
<dbReference type="NCBIfam" id="TIGR00231">
    <property type="entry name" value="small_GTP"/>
    <property type="match status" value="1"/>
</dbReference>
<dbReference type="PANTHER" id="PTHR43512:SF4">
    <property type="entry name" value="TRANSLATION FACTOR GUF1 HOMOLOG, CHLOROPLASTIC"/>
    <property type="match status" value="1"/>
</dbReference>
<dbReference type="PANTHER" id="PTHR43512">
    <property type="entry name" value="TRANSLATION FACTOR GUF1-RELATED"/>
    <property type="match status" value="1"/>
</dbReference>
<dbReference type="Pfam" id="PF00679">
    <property type="entry name" value="EFG_C"/>
    <property type="match status" value="1"/>
</dbReference>
<dbReference type="Pfam" id="PF00009">
    <property type="entry name" value="GTP_EFTU"/>
    <property type="match status" value="1"/>
</dbReference>
<dbReference type="Pfam" id="PF03144">
    <property type="entry name" value="GTP_EFTU_D2"/>
    <property type="match status" value="1"/>
</dbReference>
<dbReference type="Pfam" id="PF06421">
    <property type="entry name" value="LepA_C"/>
    <property type="match status" value="1"/>
</dbReference>
<dbReference type="PRINTS" id="PR00315">
    <property type="entry name" value="ELONGATNFCT"/>
</dbReference>
<dbReference type="SMART" id="SM00838">
    <property type="entry name" value="EFG_C"/>
    <property type="match status" value="1"/>
</dbReference>
<dbReference type="SUPFAM" id="SSF54980">
    <property type="entry name" value="EF-G C-terminal domain-like"/>
    <property type="match status" value="2"/>
</dbReference>
<dbReference type="SUPFAM" id="SSF52540">
    <property type="entry name" value="P-loop containing nucleoside triphosphate hydrolases"/>
    <property type="match status" value="1"/>
</dbReference>
<dbReference type="PROSITE" id="PS00301">
    <property type="entry name" value="G_TR_1"/>
    <property type="match status" value="1"/>
</dbReference>
<dbReference type="PROSITE" id="PS51722">
    <property type="entry name" value="G_TR_2"/>
    <property type="match status" value="1"/>
</dbReference>
<gene>
    <name evidence="1" type="primary">lepA</name>
    <name type="ordered locus">xcc-b100_3033</name>
</gene>
<proteinExistence type="inferred from homology"/>
<organism>
    <name type="scientific">Xanthomonas campestris pv. campestris (strain B100)</name>
    <dbReference type="NCBI Taxonomy" id="509169"/>
    <lineage>
        <taxon>Bacteria</taxon>
        <taxon>Pseudomonadati</taxon>
        <taxon>Pseudomonadota</taxon>
        <taxon>Gammaproteobacteria</taxon>
        <taxon>Lysobacterales</taxon>
        <taxon>Lysobacteraceae</taxon>
        <taxon>Xanthomonas</taxon>
    </lineage>
</organism>
<evidence type="ECO:0000255" key="1">
    <source>
        <dbReference type="HAMAP-Rule" id="MF_00071"/>
    </source>
</evidence>
<protein>
    <recommendedName>
        <fullName evidence="1">Elongation factor 4</fullName>
        <shortName evidence="1">EF-4</shortName>
        <ecNumber evidence="1">3.6.5.n1</ecNumber>
    </recommendedName>
    <alternativeName>
        <fullName evidence="1">Ribosomal back-translocase LepA</fullName>
    </alternativeName>
</protein>